<protein>
    <recommendedName>
        <fullName>Dihydroflavonol 4-reductase</fullName>
        <shortName>DFR</shortName>
        <ecNumber evidence="2">1.1.1.219</ecNumber>
    </recommendedName>
    <alternativeName>
        <fullName>Dihydrokaempferol 4-reductase</fullName>
    </alternativeName>
    <alternativeName>
        <fullName>Flavanone 4-reductase</fullName>
        <shortName>FNR</shortName>
        <ecNumber evidence="2">1.1.1.234</ecNumber>
    </alternativeName>
    <alternativeName>
        <fullName>Protein TRANSPARENT TESTA 3</fullName>
    </alternativeName>
</protein>
<proteinExistence type="evidence at protein level"/>
<feature type="chain" id="PRO_0000215563" description="Dihydroflavonol 4-reductase">
    <location>
        <begin position="1"/>
        <end position="382"/>
    </location>
</feature>
<feature type="binding site" evidence="1">
    <location>
        <position position="44"/>
    </location>
    <ligand>
        <name>NADP(+)</name>
        <dbReference type="ChEBI" id="CHEBI:58349"/>
    </ligand>
</feature>
<feature type="binding site" evidence="1">
    <location>
        <position position="163"/>
    </location>
    <ligand>
        <name>NADP(+)</name>
        <dbReference type="ChEBI" id="CHEBI:58349"/>
    </ligand>
</feature>
<feature type="sequence conflict" description="In Ref. 1; AAA32783 and 2; BAA85261." evidence="3" ref="1 2">
    <original>L</original>
    <variation>Q</variation>
    <location>
        <position position="57"/>
    </location>
</feature>
<feature type="sequence conflict" description="In Ref. 1; AAA32783 and 2; BAA85261." evidence="3" ref="1 2">
    <original>T</original>
    <variation>S</variation>
    <location>
        <position position="168"/>
    </location>
</feature>
<feature type="sequence conflict" description="In Ref. 1; AAA32783 and 2; BAA85261." evidence="3" ref="1 2">
    <original>D</original>
    <variation>E</variation>
    <location>
        <position position="299"/>
    </location>
</feature>
<feature type="sequence conflict" description="In Ref. 1; AAA32783 and 2; BAA85261." evidence="3" ref="1 2">
    <original>K</original>
    <variation>KVP</variation>
    <location>
        <position position="338"/>
    </location>
</feature>
<feature type="sequence conflict" description="In Ref. 1; AAA32783 and 2; BAA85261." evidence="3" ref="1 2">
    <original>N</original>
    <variation>I</variation>
    <location>
        <position position="343"/>
    </location>
</feature>
<feature type="sequence conflict" description="In Ref. 1; AAA32783 and 2; BAA85261." evidence="3" ref="1 2">
    <original>D</original>
    <variation>E</variation>
    <location>
        <position position="345"/>
    </location>
</feature>
<feature type="sequence conflict" description="In Ref. 1; AAA32783 and 2; BAA85261." evidence="3" ref="1 2">
    <original>I</original>
    <variation>V</variation>
    <location>
        <position position="366"/>
    </location>
</feature>
<organism>
    <name type="scientific">Arabidopsis thaliana</name>
    <name type="common">Mouse-ear cress</name>
    <dbReference type="NCBI Taxonomy" id="3702"/>
    <lineage>
        <taxon>Eukaryota</taxon>
        <taxon>Viridiplantae</taxon>
        <taxon>Streptophyta</taxon>
        <taxon>Embryophyta</taxon>
        <taxon>Tracheophyta</taxon>
        <taxon>Spermatophyta</taxon>
        <taxon>Magnoliopsida</taxon>
        <taxon>eudicotyledons</taxon>
        <taxon>Gunneridae</taxon>
        <taxon>Pentapetalae</taxon>
        <taxon>rosids</taxon>
        <taxon>malvids</taxon>
        <taxon>Brassicales</taxon>
        <taxon>Brassicaceae</taxon>
        <taxon>Camelineae</taxon>
        <taxon>Arabidopsis</taxon>
    </lineage>
</organism>
<sequence>MVSQKETVCVTGASGFIGSWLVMRLLERGYFVRATVRDPGNLKKVQHLLDLPNAKTLLTLWKADLSEEGSYDDAINGCDGVFHVATPMDFESKDPENEVIKPTVNGMLGIMKACVKAKTVRRFVFTSSAGTVNVEEHQKNVYDENDWSDLEFIMSKKMTGWMYFVSKTLAEKAAWDFAEEKGLDFISIIPTLVVGPFITTSMPPSLITALSPITRNEAHYSIIRQGQYVHLDDLCNAHIFLYEQAAAKGRYICSSHDATILTISKFLRPKYPEYNVPSTFEGVDENLKSIEFSSKKLTDMGFNFKYSLEEMFIESIETCRQKGFLPVSLSYQSISEIKTKNENIDVKTGDGLTDGMKPCNKTETGITGERTDAPMLAQQMCA</sequence>
<comment type="function">
    <text evidence="2">Bifunctional enzyme involved in flavonoid metabolism.</text>
</comment>
<comment type="catalytic activity">
    <reaction evidence="2">
        <text>a (2R,3S,4S)-leucoanthocyanidin + NADP(+) = a (2R,3R)-dihydroflavonol + NADPH + H(+)</text>
        <dbReference type="Rhea" id="RHEA:54444"/>
        <dbReference type="ChEBI" id="CHEBI:15378"/>
        <dbReference type="ChEBI" id="CHEBI:57783"/>
        <dbReference type="ChEBI" id="CHEBI:58349"/>
        <dbReference type="ChEBI" id="CHEBI:138176"/>
        <dbReference type="ChEBI" id="CHEBI:138188"/>
        <dbReference type="EC" id="1.1.1.219"/>
    </reaction>
</comment>
<comment type="catalytic activity">
    <reaction evidence="2">
        <text>(2S)-flavan-4-ol + NADP(+) = (2S)-flavanone + NADPH + H(+)</text>
        <dbReference type="Rhea" id="RHEA:11228"/>
        <dbReference type="ChEBI" id="CHEBI:15378"/>
        <dbReference type="ChEBI" id="CHEBI:15605"/>
        <dbReference type="ChEBI" id="CHEBI:15606"/>
        <dbReference type="ChEBI" id="CHEBI:57783"/>
        <dbReference type="ChEBI" id="CHEBI:58349"/>
        <dbReference type="EC" id="1.1.1.234"/>
    </reaction>
</comment>
<comment type="pathway">
    <text>Pigment biosynthesis; anthocyanin biosynthesis.</text>
</comment>
<comment type="interaction">
    <interactant intactId="EBI-1546795">
        <id>P51102</id>
    </interactant>
    <interactant intactId="EBI-1546775">
        <id>P13114</id>
        <label>CHS</label>
    </interactant>
    <organismsDiffer>false</organismsDiffer>
    <experiments>4</experiments>
</comment>
<comment type="similarity">
    <text evidence="3">Belongs to the NAD(P)-dependent epimerase/dehydratase family. Dihydroflavonol-4-reductase subfamily.</text>
</comment>
<keyword id="KW-0284">Flavonoid biosynthesis</keyword>
<keyword id="KW-0521">NADP</keyword>
<keyword id="KW-0560">Oxidoreductase</keyword>
<keyword id="KW-1185">Reference proteome</keyword>
<evidence type="ECO:0000250" key="1">
    <source>
        <dbReference type="UniProtKB" id="A0A059TC02"/>
    </source>
</evidence>
<evidence type="ECO:0000250" key="2">
    <source>
        <dbReference type="UniProtKB" id="Q9XES5"/>
    </source>
</evidence>
<evidence type="ECO:0000305" key="3"/>
<name>DFRA_ARATH</name>
<dbReference type="EC" id="1.1.1.219" evidence="2"/>
<dbReference type="EC" id="1.1.1.234" evidence="2"/>
<dbReference type="EMBL" id="M86359">
    <property type="protein sequence ID" value="AAA32783.1"/>
    <property type="molecule type" value="Genomic_DNA"/>
</dbReference>
<dbReference type="EMBL" id="AB033294">
    <property type="protein sequence ID" value="BAA85261.1"/>
    <property type="molecule type" value="Genomic_DNA"/>
</dbReference>
<dbReference type="EMBL" id="AJ251982">
    <property type="protein sequence ID" value="CAC10525.1"/>
    <property type="molecule type" value="Genomic_DNA"/>
</dbReference>
<dbReference type="EMBL" id="AB007647">
    <property type="protein sequence ID" value="BAB10636.1"/>
    <property type="molecule type" value="Genomic_DNA"/>
</dbReference>
<dbReference type="EMBL" id="CP002688">
    <property type="protein sequence ID" value="AED94866.1"/>
    <property type="molecule type" value="Genomic_DNA"/>
</dbReference>
<dbReference type="PIR" id="JQ1688">
    <property type="entry name" value="JQ1688"/>
</dbReference>
<dbReference type="RefSeq" id="NP_199094.1">
    <property type="nucleotide sequence ID" value="NM_123645.4"/>
</dbReference>
<dbReference type="SMR" id="P51102"/>
<dbReference type="BioGRID" id="19541">
    <property type="interactions" value="5"/>
</dbReference>
<dbReference type="FunCoup" id="P51102">
    <property type="interactions" value="169"/>
</dbReference>
<dbReference type="IntAct" id="P51102">
    <property type="interactions" value="4"/>
</dbReference>
<dbReference type="MINT" id="P51102"/>
<dbReference type="STRING" id="3702.P51102"/>
<dbReference type="iPTMnet" id="P51102"/>
<dbReference type="PaxDb" id="3702-AT5G42800.1"/>
<dbReference type="ProteomicsDB" id="224580"/>
<dbReference type="EnsemblPlants" id="AT5G42800.1">
    <property type="protein sequence ID" value="AT5G42800.1"/>
    <property type="gene ID" value="AT5G42800"/>
</dbReference>
<dbReference type="GeneID" id="834291"/>
<dbReference type="Gramene" id="AT5G42800.1">
    <property type="protein sequence ID" value="AT5G42800.1"/>
    <property type="gene ID" value="AT5G42800"/>
</dbReference>
<dbReference type="KEGG" id="ath:AT5G42800"/>
<dbReference type="Araport" id="AT5G42800"/>
<dbReference type="TAIR" id="AT5G42800">
    <property type="gene designation" value="DFR"/>
</dbReference>
<dbReference type="eggNOG" id="KOG1502">
    <property type="taxonomic scope" value="Eukaryota"/>
</dbReference>
<dbReference type="HOGENOM" id="CLU_007383_9_0_1"/>
<dbReference type="InParanoid" id="P51102"/>
<dbReference type="OMA" id="NEAHYTI"/>
<dbReference type="PhylomeDB" id="P51102"/>
<dbReference type="BRENDA" id="1.1.1.219">
    <property type="organism ID" value="399"/>
</dbReference>
<dbReference type="UniPathway" id="UPA00009"/>
<dbReference type="PRO" id="PR:P51102"/>
<dbReference type="Proteomes" id="UP000006548">
    <property type="component" value="Chromosome 5"/>
</dbReference>
<dbReference type="ExpressionAtlas" id="P51102">
    <property type="expression patterns" value="baseline and differential"/>
</dbReference>
<dbReference type="GO" id="GO:0042406">
    <property type="term" value="C:extrinsic component of endoplasmic reticulum membrane"/>
    <property type="evidence" value="ECO:0000304"/>
    <property type="project" value="TAIR"/>
</dbReference>
<dbReference type="GO" id="GO:0045552">
    <property type="term" value="F:dihydrokaempferol 4-reductase activity"/>
    <property type="evidence" value="ECO:0000304"/>
    <property type="project" value="TAIR"/>
</dbReference>
<dbReference type="GO" id="GO:0047890">
    <property type="term" value="F:flavanone 4-reductase activity"/>
    <property type="evidence" value="ECO:0007669"/>
    <property type="project" value="UniProtKB-EC"/>
</dbReference>
<dbReference type="GO" id="GO:0009718">
    <property type="term" value="P:anthocyanin-containing compound biosynthetic process"/>
    <property type="evidence" value="ECO:0000304"/>
    <property type="project" value="TAIR"/>
</dbReference>
<dbReference type="CDD" id="cd08958">
    <property type="entry name" value="FR_SDR_e"/>
    <property type="match status" value="1"/>
</dbReference>
<dbReference type="FunFam" id="3.40.50.720:FF:000085">
    <property type="entry name" value="Dihydroflavonol reductase"/>
    <property type="match status" value="1"/>
</dbReference>
<dbReference type="Gene3D" id="3.40.50.720">
    <property type="entry name" value="NAD(P)-binding Rossmann-like Domain"/>
    <property type="match status" value="1"/>
</dbReference>
<dbReference type="InterPro" id="IPR001509">
    <property type="entry name" value="Epimerase_deHydtase"/>
</dbReference>
<dbReference type="InterPro" id="IPR036291">
    <property type="entry name" value="NAD(P)-bd_dom_sf"/>
</dbReference>
<dbReference type="InterPro" id="IPR050425">
    <property type="entry name" value="NAD(P)_dehydrat-like"/>
</dbReference>
<dbReference type="PANTHER" id="PTHR10366">
    <property type="entry name" value="NAD DEPENDENT EPIMERASE/DEHYDRATASE"/>
    <property type="match status" value="1"/>
</dbReference>
<dbReference type="PANTHER" id="PTHR10366:SF564">
    <property type="entry name" value="STEROL-4-ALPHA-CARBOXYLATE 3-DEHYDROGENASE, DECARBOXYLATING"/>
    <property type="match status" value="1"/>
</dbReference>
<dbReference type="Pfam" id="PF01370">
    <property type="entry name" value="Epimerase"/>
    <property type="match status" value="1"/>
</dbReference>
<dbReference type="SUPFAM" id="SSF51735">
    <property type="entry name" value="NAD(P)-binding Rossmann-fold domains"/>
    <property type="match status" value="1"/>
</dbReference>
<accession>P51102</accession>
<accession>Q9FEB1</accession>
<gene>
    <name type="primary">DFRA</name>
    <name type="synonym">DFR</name>
    <name type="synonym">TT3</name>
    <name type="ordered locus">At5g42800</name>
    <name type="ORF">MJB21.18</name>
</gene>
<reference key="1">
    <citation type="journal article" date="1992" name="Plant Cell">
        <title>Effects of ionizing radiation on a plant genome: analysis of two Arabidopsis transparent testa mutations.</title>
        <authorList>
            <person name="Shirley B.W."/>
            <person name="Hanley S."/>
            <person name="Goodman H.M."/>
        </authorList>
    </citation>
    <scope>NUCLEOTIDE SEQUENCE [GENOMIC DNA]</scope>
    <source>
        <strain>cv. Columbia</strain>
        <strain>cv. Landsberg erecta</strain>
    </source>
</reference>
<reference key="2">
    <citation type="submission" date="1999-10" db="EMBL/GenBank/DDBJ databases">
        <title>Structure of dihydroflavonol 4-reductase (DFR) gene and its flanking sequences from Arabidopsis thaliana ecotype Landsberg erecta.</title>
        <authorList>
            <person name="Ichikawa H."/>
            <person name="Okano E."/>
            <person name="Shirley B.W."/>
        </authorList>
    </citation>
    <scope>NUCLEOTIDE SEQUENCE [GENOMIC DNA]</scope>
    <source>
        <strain>cv. Landsberg erecta</strain>
    </source>
</reference>
<reference key="3">
    <citation type="submission" date="1999-12" db="EMBL/GenBank/DDBJ databases">
        <title>Physiological and molecular characterization of transparent testa mutants of Arabidopsis impaired in phenylpropanoid pathway.</title>
        <authorList>
            <person name="Bharti A.K."/>
            <person name="Khurana J.P."/>
        </authorList>
    </citation>
    <scope>NUCLEOTIDE SEQUENCE [GENOMIC DNA]</scope>
    <source>
        <strain>cv. Est</strain>
    </source>
</reference>
<reference key="4">
    <citation type="journal article" date="1997" name="DNA Res.">
        <title>Structural analysis of Arabidopsis thaliana chromosome 5. III. Sequence features of the regions of 1,191,918 bp covered by seventeen physically assigned P1 clones.</title>
        <authorList>
            <person name="Nakamura Y."/>
            <person name="Sato S."/>
            <person name="Kaneko T."/>
            <person name="Kotani H."/>
            <person name="Asamizu E."/>
            <person name="Miyajima N."/>
            <person name="Tabata S."/>
        </authorList>
    </citation>
    <scope>NUCLEOTIDE SEQUENCE [LARGE SCALE GENOMIC DNA]</scope>
    <source>
        <strain>cv. Columbia</strain>
    </source>
</reference>
<reference key="5">
    <citation type="journal article" date="2017" name="Plant J.">
        <title>Araport11: a complete reannotation of the Arabidopsis thaliana reference genome.</title>
        <authorList>
            <person name="Cheng C.Y."/>
            <person name="Krishnakumar V."/>
            <person name="Chan A.P."/>
            <person name="Thibaud-Nissen F."/>
            <person name="Schobel S."/>
            <person name="Town C.D."/>
        </authorList>
    </citation>
    <scope>GENOME REANNOTATION</scope>
    <source>
        <strain>cv. Columbia</strain>
    </source>
</reference>
<reference key="6">
    <citation type="journal article" date="2013" name="Plant Physiol. Biochem.">
        <title>The flavonoid biosynthetic pathway in Arabidopsis: Structural and genetic diversity.</title>
        <authorList>
            <person name="Saito K."/>
            <person name="Yonekura-Sakakibara K."/>
            <person name="Nakabayashi R."/>
            <person name="Higashi Y."/>
            <person name="Yamazaki M."/>
            <person name="Tohge T."/>
            <person name="Fernie A.R."/>
        </authorList>
    </citation>
    <scope>REVIEW</scope>
    <scope>NOMENCLATURE</scope>
</reference>